<evidence type="ECO:0000255" key="1">
    <source>
        <dbReference type="HAMAP-Rule" id="MF_01014"/>
    </source>
</evidence>
<accession>Q3KJI6</accession>
<dbReference type="EC" id="5.3.1.16" evidence="1"/>
<dbReference type="EMBL" id="CP000094">
    <property type="protein sequence ID" value="ABA72070.1"/>
    <property type="molecule type" value="Genomic_DNA"/>
</dbReference>
<dbReference type="RefSeq" id="WP_011332019.1">
    <property type="nucleotide sequence ID" value="NC_007492.2"/>
</dbReference>
<dbReference type="SMR" id="Q3KJI6"/>
<dbReference type="KEGG" id="pfo:Pfl01_0326"/>
<dbReference type="eggNOG" id="COG0106">
    <property type="taxonomic scope" value="Bacteria"/>
</dbReference>
<dbReference type="HOGENOM" id="CLU_048577_1_1_6"/>
<dbReference type="UniPathway" id="UPA00031">
    <property type="reaction ID" value="UER00009"/>
</dbReference>
<dbReference type="Proteomes" id="UP000002704">
    <property type="component" value="Chromosome"/>
</dbReference>
<dbReference type="GO" id="GO:0005737">
    <property type="term" value="C:cytoplasm"/>
    <property type="evidence" value="ECO:0007669"/>
    <property type="project" value="UniProtKB-SubCell"/>
</dbReference>
<dbReference type="GO" id="GO:0003949">
    <property type="term" value="F:1-(5-phosphoribosyl)-5-[(5-phosphoribosylamino)methylideneamino]imidazole-4-carboxamide isomerase activity"/>
    <property type="evidence" value="ECO:0007669"/>
    <property type="project" value="UniProtKB-UniRule"/>
</dbReference>
<dbReference type="GO" id="GO:0000105">
    <property type="term" value="P:L-histidine biosynthetic process"/>
    <property type="evidence" value="ECO:0007669"/>
    <property type="project" value="UniProtKB-UniRule"/>
</dbReference>
<dbReference type="GO" id="GO:0000162">
    <property type="term" value="P:L-tryptophan biosynthetic process"/>
    <property type="evidence" value="ECO:0007669"/>
    <property type="project" value="TreeGrafter"/>
</dbReference>
<dbReference type="CDD" id="cd04732">
    <property type="entry name" value="HisA"/>
    <property type="match status" value="1"/>
</dbReference>
<dbReference type="FunFam" id="3.20.20.70:FF:000009">
    <property type="entry name" value="1-(5-phosphoribosyl)-5-[(5-phosphoribosylamino)methylideneamino] imidazole-4-carboxamide isomerase"/>
    <property type="match status" value="1"/>
</dbReference>
<dbReference type="Gene3D" id="3.20.20.70">
    <property type="entry name" value="Aldolase class I"/>
    <property type="match status" value="1"/>
</dbReference>
<dbReference type="HAMAP" id="MF_01014">
    <property type="entry name" value="HisA"/>
    <property type="match status" value="1"/>
</dbReference>
<dbReference type="InterPro" id="IPR013785">
    <property type="entry name" value="Aldolase_TIM"/>
</dbReference>
<dbReference type="InterPro" id="IPR006062">
    <property type="entry name" value="His_biosynth"/>
</dbReference>
<dbReference type="InterPro" id="IPR006063">
    <property type="entry name" value="HisA_bact_arch"/>
</dbReference>
<dbReference type="InterPro" id="IPR044524">
    <property type="entry name" value="Isoase_HisA-like"/>
</dbReference>
<dbReference type="InterPro" id="IPR023016">
    <property type="entry name" value="Isoase_HisA-like_bact"/>
</dbReference>
<dbReference type="InterPro" id="IPR011060">
    <property type="entry name" value="RibuloseP-bd_barrel"/>
</dbReference>
<dbReference type="NCBIfam" id="TIGR00007">
    <property type="entry name" value="1-(5-phosphoribosyl)-5-[(5-phosphoribosylamino)methylideneamino]imidazole-4-carboxamide isomerase"/>
    <property type="match status" value="1"/>
</dbReference>
<dbReference type="PANTHER" id="PTHR43090">
    <property type="entry name" value="1-(5-PHOSPHORIBOSYL)-5-[(5-PHOSPHORIBOSYLAMINO)METHYLIDENEAMINO] IMIDAZOLE-4-CARBOXAMIDE ISOMERASE"/>
    <property type="match status" value="1"/>
</dbReference>
<dbReference type="PANTHER" id="PTHR43090:SF2">
    <property type="entry name" value="1-(5-PHOSPHORIBOSYL)-5-[(5-PHOSPHORIBOSYLAMINO)METHYLIDENEAMINO] IMIDAZOLE-4-CARBOXAMIDE ISOMERASE"/>
    <property type="match status" value="1"/>
</dbReference>
<dbReference type="Pfam" id="PF00977">
    <property type="entry name" value="His_biosynth"/>
    <property type="match status" value="1"/>
</dbReference>
<dbReference type="SUPFAM" id="SSF51366">
    <property type="entry name" value="Ribulose-phoshate binding barrel"/>
    <property type="match status" value="1"/>
</dbReference>
<reference key="1">
    <citation type="journal article" date="2009" name="Genome Biol.">
        <title>Genomic and genetic analyses of diversity and plant interactions of Pseudomonas fluorescens.</title>
        <authorList>
            <person name="Silby M.W."/>
            <person name="Cerdeno-Tarraga A.M."/>
            <person name="Vernikos G.S."/>
            <person name="Giddens S.R."/>
            <person name="Jackson R.W."/>
            <person name="Preston G.M."/>
            <person name="Zhang X.-X."/>
            <person name="Moon C.D."/>
            <person name="Gehrig S.M."/>
            <person name="Godfrey S.A.C."/>
            <person name="Knight C.G."/>
            <person name="Malone J.G."/>
            <person name="Robinson Z."/>
            <person name="Spiers A.J."/>
            <person name="Harris S."/>
            <person name="Challis G.L."/>
            <person name="Yaxley A.M."/>
            <person name="Harris D."/>
            <person name="Seeger K."/>
            <person name="Murphy L."/>
            <person name="Rutter S."/>
            <person name="Squares R."/>
            <person name="Quail M.A."/>
            <person name="Saunders E."/>
            <person name="Mavromatis K."/>
            <person name="Brettin T.S."/>
            <person name="Bentley S.D."/>
            <person name="Hothersall J."/>
            <person name="Stephens E."/>
            <person name="Thomas C.M."/>
            <person name="Parkhill J."/>
            <person name="Levy S.B."/>
            <person name="Rainey P.B."/>
            <person name="Thomson N.R."/>
        </authorList>
    </citation>
    <scope>NUCLEOTIDE SEQUENCE [LARGE SCALE GENOMIC DNA]</scope>
    <source>
        <strain>Pf0-1</strain>
    </source>
</reference>
<sequence length="245" mass="25755">MLIIPAIDLKDGACVRLRQGRMEDSTVFSDDPVSMAAKWVEGGCRRLHLVDLNGAFEGQPVNGEVVTAIAKRYPTLPIQIGGGIRSLETIEHYVKAGVSYVIIGTKAVKDPAFVAEACRAFPGKIIVGLDAKDGFVATDGWAEISTVQVIDLAKQFEADGVSSIVYTDIAKDGMMQGCNVPFTAALAAATKIPVIASGGIHNLGDIKSLLDAKVPGIIGAITGRAIYEGTLDVAEAQAFCDSYQG</sequence>
<proteinExistence type="inferred from homology"/>
<organism>
    <name type="scientific">Pseudomonas fluorescens (strain Pf0-1)</name>
    <dbReference type="NCBI Taxonomy" id="205922"/>
    <lineage>
        <taxon>Bacteria</taxon>
        <taxon>Pseudomonadati</taxon>
        <taxon>Pseudomonadota</taxon>
        <taxon>Gammaproteobacteria</taxon>
        <taxon>Pseudomonadales</taxon>
        <taxon>Pseudomonadaceae</taxon>
        <taxon>Pseudomonas</taxon>
    </lineage>
</organism>
<protein>
    <recommendedName>
        <fullName evidence="1">1-(5-phosphoribosyl)-5-[(5-phosphoribosylamino)methylideneamino] imidazole-4-carboxamide isomerase</fullName>
        <ecNumber evidence="1">5.3.1.16</ecNumber>
    </recommendedName>
    <alternativeName>
        <fullName evidence="1">Phosphoribosylformimino-5-aminoimidazole carboxamide ribotide isomerase</fullName>
    </alternativeName>
</protein>
<gene>
    <name evidence="1" type="primary">hisA</name>
    <name type="ordered locus">Pfl01_0326</name>
</gene>
<keyword id="KW-0028">Amino-acid biosynthesis</keyword>
<keyword id="KW-0963">Cytoplasm</keyword>
<keyword id="KW-0368">Histidine biosynthesis</keyword>
<keyword id="KW-0413">Isomerase</keyword>
<name>HIS4_PSEPF</name>
<feature type="chain" id="PRO_0000229073" description="1-(5-phosphoribosyl)-5-[(5-phosphoribosylamino)methylideneamino] imidazole-4-carboxamide isomerase">
    <location>
        <begin position="1"/>
        <end position="245"/>
    </location>
</feature>
<feature type="active site" description="Proton acceptor" evidence="1">
    <location>
        <position position="8"/>
    </location>
</feature>
<feature type="active site" description="Proton donor" evidence="1">
    <location>
        <position position="130"/>
    </location>
</feature>
<comment type="catalytic activity">
    <reaction evidence="1">
        <text>1-(5-phospho-beta-D-ribosyl)-5-[(5-phospho-beta-D-ribosylamino)methylideneamino]imidazole-4-carboxamide = 5-[(5-phospho-1-deoxy-D-ribulos-1-ylimino)methylamino]-1-(5-phospho-beta-D-ribosyl)imidazole-4-carboxamide</text>
        <dbReference type="Rhea" id="RHEA:15469"/>
        <dbReference type="ChEBI" id="CHEBI:58435"/>
        <dbReference type="ChEBI" id="CHEBI:58525"/>
        <dbReference type="EC" id="5.3.1.16"/>
    </reaction>
</comment>
<comment type="pathway">
    <text evidence="1">Amino-acid biosynthesis; L-histidine biosynthesis; L-histidine from 5-phospho-alpha-D-ribose 1-diphosphate: step 4/9.</text>
</comment>
<comment type="subcellular location">
    <subcellularLocation>
        <location evidence="1">Cytoplasm</location>
    </subcellularLocation>
</comment>
<comment type="similarity">
    <text evidence="1">Belongs to the HisA/HisF family.</text>
</comment>